<evidence type="ECO:0000255" key="1">
    <source>
        <dbReference type="HAMAP-Rule" id="MF_00580"/>
    </source>
</evidence>
<reference key="1">
    <citation type="submission" date="1998-11" db="EMBL/GenBank/DDBJ databases">
        <title>Nucleotide sequence comparison of the groE operon of Burkholderia spp.</title>
        <authorList>
            <person name="Zysk G."/>
            <person name="Splettstoesser W.D."/>
            <person name="Neubauer H."/>
        </authorList>
    </citation>
    <scope>NUCLEOTIDE SEQUENCE [GENOMIC DNA]</scope>
    <source>
        <strain>ATCC 25609 / LMG 6865 / NCIMB 10649 / NCTC 10744</strain>
    </source>
</reference>
<accession>Q9ZFE1</accession>
<feature type="chain" id="PRO_0000174722" description="Co-chaperonin GroES">
    <location>
        <begin position="1"/>
        <end position="97"/>
    </location>
</feature>
<name>CH10_BURCE</name>
<protein>
    <recommendedName>
        <fullName evidence="1">Co-chaperonin GroES</fullName>
    </recommendedName>
    <alternativeName>
        <fullName evidence="1">10 kDa chaperonin</fullName>
    </alternativeName>
    <alternativeName>
        <fullName evidence="1">Chaperonin-10</fullName>
        <shortName evidence="1">Cpn10</shortName>
    </alternativeName>
</protein>
<proteinExistence type="inferred from homology"/>
<keyword id="KW-0143">Chaperone</keyword>
<keyword id="KW-0963">Cytoplasm</keyword>
<dbReference type="EMBL" id="AF104907">
    <property type="protein sequence ID" value="AAC79086.1"/>
    <property type="molecule type" value="Genomic_DNA"/>
</dbReference>
<dbReference type="RefSeq" id="WP_004186661.1">
    <property type="nucleotide sequence ID" value="NZ_KN150854.1"/>
</dbReference>
<dbReference type="SMR" id="Q9ZFE1"/>
<dbReference type="STRING" id="292.WI67_04130"/>
<dbReference type="GeneID" id="98102753"/>
<dbReference type="eggNOG" id="COG0234">
    <property type="taxonomic scope" value="Bacteria"/>
</dbReference>
<dbReference type="GO" id="GO:0005737">
    <property type="term" value="C:cytoplasm"/>
    <property type="evidence" value="ECO:0007669"/>
    <property type="project" value="UniProtKB-SubCell"/>
</dbReference>
<dbReference type="GO" id="GO:0005524">
    <property type="term" value="F:ATP binding"/>
    <property type="evidence" value="ECO:0007669"/>
    <property type="project" value="InterPro"/>
</dbReference>
<dbReference type="GO" id="GO:0046872">
    <property type="term" value="F:metal ion binding"/>
    <property type="evidence" value="ECO:0007669"/>
    <property type="project" value="TreeGrafter"/>
</dbReference>
<dbReference type="GO" id="GO:0044183">
    <property type="term" value="F:protein folding chaperone"/>
    <property type="evidence" value="ECO:0007669"/>
    <property type="project" value="InterPro"/>
</dbReference>
<dbReference type="GO" id="GO:0051087">
    <property type="term" value="F:protein-folding chaperone binding"/>
    <property type="evidence" value="ECO:0007669"/>
    <property type="project" value="TreeGrafter"/>
</dbReference>
<dbReference type="GO" id="GO:0051082">
    <property type="term" value="F:unfolded protein binding"/>
    <property type="evidence" value="ECO:0007669"/>
    <property type="project" value="TreeGrafter"/>
</dbReference>
<dbReference type="GO" id="GO:0051085">
    <property type="term" value="P:chaperone cofactor-dependent protein refolding"/>
    <property type="evidence" value="ECO:0007669"/>
    <property type="project" value="TreeGrafter"/>
</dbReference>
<dbReference type="CDD" id="cd00320">
    <property type="entry name" value="cpn10"/>
    <property type="match status" value="1"/>
</dbReference>
<dbReference type="FunFam" id="2.30.33.40:FF:000001">
    <property type="entry name" value="10 kDa chaperonin"/>
    <property type="match status" value="1"/>
</dbReference>
<dbReference type="Gene3D" id="2.30.33.40">
    <property type="entry name" value="GroES chaperonin"/>
    <property type="match status" value="1"/>
</dbReference>
<dbReference type="HAMAP" id="MF_00580">
    <property type="entry name" value="CH10"/>
    <property type="match status" value="1"/>
</dbReference>
<dbReference type="InterPro" id="IPR020818">
    <property type="entry name" value="Chaperonin_GroES"/>
</dbReference>
<dbReference type="InterPro" id="IPR037124">
    <property type="entry name" value="Chaperonin_GroES_sf"/>
</dbReference>
<dbReference type="InterPro" id="IPR018369">
    <property type="entry name" value="Chaprnonin_Cpn10_CS"/>
</dbReference>
<dbReference type="InterPro" id="IPR011032">
    <property type="entry name" value="GroES-like_sf"/>
</dbReference>
<dbReference type="NCBIfam" id="NF001527">
    <property type="entry name" value="PRK00364.1-2"/>
    <property type="match status" value="1"/>
</dbReference>
<dbReference type="NCBIfam" id="NF001529">
    <property type="entry name" value="PRK00364.1-5"/>
    <property type="match status" value="1"/>
</dbReference>
<dbReference type="NCBIfam" id="NF001531">
    <property type="entry name" value="PRK00364.2-2"/>
    <property type="match status" value="1"/>
</dbReference>
<dbReference type="NCBIfam" id="NF001533">
    <property type="entry name" value="PRK00364.2-4"/>
    <property type="match status" value="1"/>
</dbReference>
<dbReference type="NCBIfam" id="NF001534">
    <property type="entry name" value="PRK00364.2-5"/>
    <property type="match status" value="1"/>
</dbReference>
<dbReference type="PANTHER" id="PTHR10772">
    <property type="entry name" value="10 KDA HEAT SHOCK PROTEIN"/>
    <property type="match status" value="1"/>
</dbReference>
<dbReference type="PANTHER" id="PTHR10772:SF58">
    <property type="entry name" value="CO-CHAPERONIN GROES"/>
    <property type="match status" value="1"/>
</dbReference>
<dbReference type="Pfam" id="PF00166">
    <property type="entry name" value="Cpn10"/>
    <property type="match status" value="1"/>
</dbReference>
<dbReference type="PRINTS" id="PR00297">
    <property type="entry name" value="CHAPERONIN10"/>
</dbReference>
<dbReference type="SMART" id="SM00883">
    <property type="entry name" value="Cpn10"/>
    <property type="match status" value="1"/>
</dbReference>
<dbReference type="SUPFAM" id="SSF50129">
    <property type="entry name" value="GroES-like"/>
    <property type="match status" value="1"/>
</dbReference>
<dbReference type="PROSITE" id="PS00681">
    <property type="entry name" value="CHAPERONINS_CPN10"/>
    <property type="match status" value="1"/>
</dbReference>
<gene>
    <name evidence="1" type="primary">groES</name>
    <name evidence="1" type="synonym">groS</name>
</gene>
<sequence length="97" mass="10490">MNLRPLHDRVIVKRLDQETKTASGIVIPDAAAEKPDQGEVLAIGPGKRDDKGAPIALDVKVGDRVLFGKYAGQTVKVDGQELLVMREEDIMAVVNAK</sequence>
<comment type="function">
    <text evidence="1">Together with the chaperonin GroEL, plays an essential role in assisting protein folding. The GroEL-GroES system forms a nano-cage that allows encapsulation of the non-native substrate proteins and provides a physical environment optimized to promote and accelerate protein folding. GroES binds to the apical surface of the GroEL ring, thereby capping the opening of the GroEL channel.</text>
</comment>
<comment type="subunit">
    <text evidence="1">Heptamer of 7 subunits arranged in a ring. Interacts with the chaperonin GroEL.</text>
</comment>
<comment type="subcellular location">
    <subcellularLocation>
        <location evidence="1">Cytoplasm</location>
    </subcellularLocation>
</comment>
<comment type="similarity">
    <text evidence="1">Belongs to the GroES chaperonin family.</text>
</comment>
<organism>
    <name type="scientific">Burkholderia cepacia</name>
    <name type="common">Pseudomonas cepacia</name>
    <dbReference type="NCBI Taxonomy" id="292"/>
    <lineage>
        <taxon>Bacteria</taxon>
        <taxon>Pseudomonadati</taxon>
        <taxon>Pseudomonadota</taxon>
        <taxon>Betaproteobacteria</taxon>
        <taxon>Burkholderiales</taxon>
        <taxon>Burkholderiaceae</taxon>
        <taxon>Burkholderia</taxon>
        <taxon>Burkholderia cepacia complex</taxon>
    </lineage>
</organism>